<dbReference type="EMBL" id="AY653733">
    <property type="protein sequence ID" value="AAV51149.1"/>
    <property type="molecule type" value="Genomic_DNA"/>
</dbReference>
<dbReference type="KEGG" id="vg:9925560"/>
<dbReference type="OrthoDB" id="19100at10239"/>
<dbReference type="Proteomes" id="UP000001134">
    <property type="component" value="Genome"/>
</dbReference>
<gene>
    <name type="ordered locus">MIMI_R892</name>
</gene>
<organism>
    <name type="scientific">Acanthamoeba polyphaga mimivirus</name>
    <name type="common">APMV</name>
    <dbReference type="NCBI Taxonomy" id="212035"/>
    <lineage>
        <taxon>Viruses</taxon>
        <taxon>Varidnaviria</taxon>
        <taxon>Bamfordvirae</taxon>
        <taxon>Nucleocytoviricota</taxon>
        <taxon>Megaviricetes</taxon>
        <taxon>Imitervirales</taxon>
        <taxon>Mimiviridae</taxon>
        <taxon>Megamimivirinae</taxon>
        <taxon>Mimivirus</taxon>
        <taxon>Mimivirus bradfordmassiliense</taxon>
    </lineage>
</organism>
<organismHost>
    <name type="scientific">Acanthamoeba polyphaga</name>
    <name type="common">Amoeba</name>
    <dbReference type="NCBI Taxonomy" id="5757"/>
</organismHost>
<protein>
    <recommendedName>
        <fullName>Uncharacterized protein R892</fullName>
    </recommendedName>
</protein>
<name>YR892_MIMIV</name>
<sequence length="269" mass="31460">MSIRTNAFIEIANRIHKNAYDYSGIVIDDETSCIDIKCKSCDNTFNVRIVNHLKKRVGCRRCNMVKTKEKKRMTTQEFIKLAQEIHGDEYDYSKTTFVRSDIPMEIICRKCGNSVFHTRHRHLVERCGCFCQRSAKKNSTEKFIEKSKLKHGPDTFDYSKTIYVNTSTKIIVQCKSCGFEMLQRYDVHLKSKGCTYCNKNTKPTTEQWINRARKFHGDKYDYSQVTYVNSRQKITIICLEHGPFETIPSNFFTTKESCSGCRHDKKLED</sequence>
<accession>Q5UQY6</accession>
<feature type="chain" id="PRO_0000250637" description="Uncharacterized protein R892">
    <location>
        <begin position="1"/>
        <end position="269"/>
    </location>
</feature>
<reference key="1">
    <citation type="journal article" date="2004" name="Science">
        <title>The 1.2-megabase genome sequence of Mimivirus.</title>
        <authorList>
            <person name="Raoult D."/>
            <person name="Audic S."/>
            <person name="Robert C."/>
            <person name="Abergel C."/>
            <person name="Renesto P."/>
            <person name="Ogata H."/>
            <person name="La Scola B."/>
            <person name="Susan M."/>
            <person name="Claverie J.-M."/>
        </authorList>
    </citation>
    <scope>NUCLEOTIDE SEQUENCE [LARGE SCALE GENOMIC DNA]</scope>
    <source>
        <strain>Rowbotham-Bradford</strain>
    </source>
</reference>
<proteinExistence type="predicted"/>
<keyword id="KW-1185">Reference proteome</keyword>